<feature type="chain" id="PRO_0000333810" description="Synaptonemal complex protein 2-like">
    <location>
        <begin position="1"/>
        <end position="977"/>
    </location>
</feature>
<feature type="region of interest" description="Disordered" evidence="3">
    <location>
        <begin position="447"/>
        <end position="474"/>
    </location>
</feature>
<feature type="region of interest" description="Disordered" evidence="3">
    <location>
        <begin position="574"/>
        <end position="593"/>
    </location>
</feature>
<feature type="region of interest" description="Disordered" evidence="3">
    <location>
        <begin position="642"/>
        <end position="728"/>
    </location>
</feature>
<feature type="region of interest" description="Disordered" evidence="3">
    <location>
        <begin position="804"/>
        <end position="824"/>
    </location>
</feature>
<feature type="compositionally biased region" description="Low complexity" evidence="3">
    <location>
        <begin position="449"/>
        <end position="462"/>
    </location>
</feature>
<feature type="compositionally biased region" description="Polar residues" evidence="3">
    <location>
        <begin position="463"/>
        <end position="474"/>
    </location>
</feature>
<feature type="compositionally biased region" description="Basic and acidic residues" evidence="3">
    <location>
        <begin position="674"/>
        <end position="693"/>
    </location>
</feature>
<protein>
    <recommendedName>
        <fullName>Synaptonemal complex protein 2-like</fullName>
        <shortName>SCP-2-like</shortName>
    </recommendedName>
    <alternativeName>
        <fullName evidence="6">145 kDa nucleolar protein</fullName>
    </alternativeName>
</protein>
<dbReference type="EMBL" id="AJ249963">
    <property type="protein sequence ID" value="CAC80718.2"/>
    <property type="molecule type" value="mRNA"/>
</dbReference>
<dbReference type="RefSeq" id="NP_001082126.1">
    <property type="nucleotide sequence ID" value="NM_001088657.1"/>
</dbReference>
<dbReference type="SMR" id="Q90WN7"/>
<dbReference type="GeneID" id="398239"/>
<dbReference type="KEGG" id="xla:398239"/>
<dbReference type="AGR" id="Xenbase:XB-GENE-919983"/>
<dbReference type="CTD" id="398239"/>
<dbReference type="Xenbase" id="XB-GENE-919983">
    <property type="gene designation" value="sycp2l.S"/>
</dbReference>
<dbReference type="OrthoDB" id="10256849at2759"/>
<dbReference type="Proteomes" id="UP000186698">
    <property type="component" value="Chromosome 6S"/>
</dbReference>
<dbReference type="Bgee" id="398239">
    <property type="expression patterns" value="Expressed in gastrula and 7 other cell types or tissues"/>
</dbReference>
<dbReference type="GO" id="GO:0000779">
    <property type="term" value="C:condensed chromosome, centromeric region"/>
    <property type="evidence" value="ECO:0000318"/>
    <property type="project" value="GO_Central"/>
</dbReference>
<dbReference type="GO" id="GO:0000800">
    <property type="term" value="C:lateral element"/>
    <property type="evidence" value="ECO:0000318"/>
    <property type="project" value="GO_Central"/>
</dbReference>
<dbReference type="GO" id="GO:0005730">
    <property type="term" value="C:nucleolus"/>
    <property type="evidence" value="ECO:0007669"/>
    <property type="project" value="UniProtKB-SubCell"/>
</dbReference>
<dbReference type="GO" id="GO:0140013">
    <property type="term" value="P:meiotic nuclear division"/>
    <property type="evidence" value="ECO:0007669"/>
    <property type="project" value="TreeGrafter"/>
</dbReference>
<dbReference type="InterPro" id="IPR024835">
    <property type="entry name" value="SYCP2-like"/>
</dbReference>
<dbReference type="InterPro" id="IPR041322">
    <property type="entry name" value="SYCP2_ARLD"/>
</dbReference>
<dbReference type="InterPro" id="IPR040560">
    <property type="entry name" value="SYCP2_SLD"/>
</dbReference>
<dbReference type="PANTHER" id="PTHR15607:SF14">
    <property type="entry name" value="SYNAPTONEMAL COMPLEX PROTEIN 2-LIKE"/>
    <property type="match status" value="1"/>
</dbReference>
<dbReference type="PANTHER" id="PTHR15607">
    <property type="entry name" value="SYNAPTONEMAL COMPLEX PROTEIN-RELATED"/>
    <property type="match status" value="1"/>
</dbReference>
<dbReference type="Pfam" id="PF18581">
    <property type="entry name" value="SYCP2_ARLD"/>
    <property type="match status" value="1"/>
</dbReference>
<dbReference type="Pfam" id="PF18584">
    <property type="entry name" value="SYCP2_SLD"/>
    <property type="match status" value="1"/>
</dbReference>
<reference key="1">
    <citation type="journal article" date="2001" name="Mol. Biol. Cell">
        <title>A novel karyoskeletal protein: characterization of protein NO145, the major component of nucleolar cortical skeleton in Xenopus oocytes.</title>
        <authorList>
            <person name="Kneissel S."/>
            <person name="Franke W.W."/>
            <person name="Gall J.G."/>
            <person name="Heid H."/>
            <person name="Reidenbach S."/>
            <person name="Schnoelzer M."/>
            <person name="Spring H."/>
            <person name="Zentgraf H."/>
            <person name="Schmidt-Zachmann M.S."/>
        </authorList>
    </citation>
    <scope>NUCLEOTIDE SEQUENCE [MRNA]</scope>
    <scope>PROTEIN SEQUENCE OF 36-42; 44-52; 54-60; 112-117; 348-360; 375-380; 440-450; 525-537; 622-626; 763-782; 894-910; 915-926 AND 940-953</scope>
    <scope>DEVELOPMENTAL STAGE</scope>
    <scope>TISSUE SPECIFICITY</scope>
    <scope>SUBCELLULAR LOCATION</scope>
    <source>
        <tissue>Ovary</tissue>
    </source>
</reference>
<reference key="2">
    <citation type="journal article" date="2007" name="J. Cell Sci.">
        <title>Regulatory mechanisms governing the oocyte-specific synthesis of the karyoskeletal protein NO145.</title>
        <authorList>
            <person name="Voltmer-Irsch S."/>
            <person name="Kneissel S."/>
            <person name="Adenot P.G."/>
            <person name="Schmidt-Zachmann M.S."/>
        </authorList>
    </citation>
    <scope>UBIQUITINATION</scope>
    <scope>PHOSPHORYLATION</scope>
    <scope>PROTEASOMAL DEGRADATION</scope>
    <scope>DEVELOPMENTAL STAGE</scope>
</reference>
<organism>
    <name type="scientific">Xenopus laevis</name>
    <name type="common">African clawed frog</name>
    <dbReference type="NCBI Taxonomy" id="8355"/>
    <lineage>
        <taxon>Eukaryota</taxon>
        <taxon>Metazoa</taxon>
        <taxon>Chordata</taxon>
        <taxon>Craniata</taxon>
        <taxon>Vertebrata</taxon>
        <taxon>Euteleostomi</taxon>
        <taxon>Amphibia</taxon>
        <taxon>Batrachia</taxon>
        <taxon>Anura</taxon>
        <taxon>Pipoidea</taxon>
        <taxon>Pipidae</taxon>
        <taxon>Xenopodinae</taxon>
        <taxon>Xenopus</taxon>
        <taxon>Xenopus</taxon>
    </lineage>
</organism>
<sequence length="977" mass="111354">MSEDGAQTAEKMDTHTQYYLESLIIDALKGKGFQKIIELFDGKVIFSSQFHNKLLLSQLDKLINKELDRNEFKHVSVLMKCIQHFCKNDCQESSTLIHQGLVSKMVLWFERTVDFLRISKEATLLTLVEDFYDSALVICKCNCEDGKRQLLDSFLIRLGHLVTEKWVACHLRLEALRTINCILDSISREDKKKLHCSEDLCELTKDLARTIQEAGDYDIQVAISEALCRMMGKKFRDSFVHQWFEDNFLADAFKEIKDKEFETDCRKFLNCLNSRHQSNKGVYTFPCITVFTDLDELKKPQDENMENFWIDFNAGSQCVSFYIHNTEGSLWDSVRLLKESVNNYTLKENDGQQMLGIYLKDPQVINTNDVTKVKIYFEPKHDIKSAIKRVFEDINEIHSNPVELDSTEGLIDIGNSLASHTVITTATTFKQWKRNQANKMDSASDILGSQTSEHSSTTKTSSANRSVQKSLSNADSHEIVIESVPLEAVITIADEQPNTAQFQDDMDDAIFQGAASDVPAKDSSQEIIIITEASADKEFAAKKTQGIFQFQGYSDTLASDQVSDAKKKILLPKQSTERATPASRYRASMNSPLQRTSSAYRSHLFCESNEVTSNTESERSWIQDFKNKSAVKSADYSCEKTRNKSKRKVLPLASESGDDEKQVDTTETVARFTSRKEMHRPEDINPKSPHSAELKLPGISALLTPGDSRSQSKSDYRYQSAIDDQDIMDPVEEASSPEMSIDHNKEPKNGHDEVYASGPLNRSVDGNNIYHAADTLQHATGKRKHKTCEREEIPFKPRKLFSSTEKNVNRSAADSEDSEDVFYSESHDQDLAEASVLSAFDSFTKELKRKFLTRYKRIENRANHVLKSSHQQVSTVLNEIHQCRLQKINHFNKIVVHELSSLEAEVQALKQFEKETLDFWEDQYVKMNTFCSSQTQRIKTMDSALLETISNLKNVIQKTTKEEVSNTEEHIQNKLLK</sequence>
<accession>Q90WN7</accession>
<proteinExistence type="evidence at protein level"/>
<gene>
    <name type="primary">sycp2l</name>
    <name evidence="6" type="synonym">no145</name>
</gene>
<comment type="function">
    <text evidence="1">Oocyte-specific protein that localizes to centromeres at the dictyate stage and regulates the survival of primordial oocytes.</text>
</comment>
<comment type="subcellular location">
    <subcellularLocation>
        <location evidence="1">Nucleus</location>
    </subcellularLocation>
    <subcellularLocation>
        <location evidence="1">Chromosome</location>
        <location evidence="1">Centromere</location>
    </subcellularLocation>
    <subcellularLocation>
        <location evidence="4">Nucleus</location>
        <location evidence="4">Nucleolus</location>
    </subcellularLocation>
    <text evidence="1 2 4">Localized to the synaptonemal complex lateral elements in late diplotene oocytes, while it is absent on the synaptonemal complex of leptotene, zygotene, pachytene and early diplotene oocytes. Localizes to centromeres in dictyate oocytes (By similarity). Detected in nuclear granules and sizable aggregates (By similarity). Localized in a cage-like cortical structure around the entire nucleolus, consisting of a meshwork of patches and filaments.</text>
</comment>
<comment type="tissue specificity">
    <text evidence="4">Expressed in immature oocytes (at protein level). Expressed in the ovary.</text>
</comment>
<comment type="developmental stage">
    <text evidence="4 5">Expressed in oocytes throughout oogenesis. Undetectable in eggs and during early embryonic stages up to the tailbud stage (at protein level). Expressed during early embryonic stages beyond stage 8 (mid-blastula transition; MBT).</text>
</comment>
<comment type="PTM">
    <text evidence="5">Ubiquitinated and gradually degraded by the proteasome during oocyte maturation.</text>
</comment>
<comment type="PTM">
    <text evidence="5">Phosphorylated in maturing oocytes, before its degradation.</text>
</comment>
<comment type="similarity">
    <text evidence="7">Belongs to the SYCP2 family.</text>
</comment>
<keyword id="KW-0137">Centromere</keyword>
<keyword id="KW-0158">Chromosome</keyword>
<keyword id="KW-0903">Direct protein sequencing</keyword>
<keyword id="KW-0539">Nucleus</keyword>
<keyword id="KW-0597">Phosphoprotein</keyword>
<keyword id="KW-1185">Reference proteome</keyword>
<keyword id="KW-0832">Ubl conjugation</keyword>
<name>SYC2L_XENLA</name>
<evidence type="ECO:0000250" key="1">
    <source>
        <dbReference type="UniProtKB" id="A0A0M3U1B0"/>
    </source>
</evidence>
<evidence type="ECO:0000250" key="2">
    <source>
        <dbReference type="UniProtKB" id="Q5T4T6"/>
    </source>
</evidence>
<evidence type="ECO:0000256" key="3">
    <source>
        <dbReference type="SAM" id="MobiDB-lite"/>
    </source>
</evidence>
<evidence type="ECO:0000269" key="4">
    <source>
    </source>
</evidence>
<evidence type="ECO:0000269" key="5">
    <source>
    </source>
</evidence>
<evidence type="ECO:0000303" key="6">
    <source>
    </source>
</evidence>
<evidence type="ECO:0000305" key="7"/>